<sequence length="473" mass="50373">MALQTREARTLAEKVWDDHVVVSGRNEAPDLIYIDLHQVHEVTSPQAFDGLRLAGRPVRRPDLTIATEDHNVPTVDIDKPIADPVSRTQVETLRRNCAEFGIRLHPMGDVEQGIVHVVGPQLGLTQPGMTIVCGDSHTSTHGAFGALAMGIGTSEVEHVLATQTLPLWPFKTMAVNVDGQLPAGVSAKDIILALIAKIGTGGGQGHVIEYQGSAIESLSMEGRMTICNMSIEAGARAGMVAPDETTYEYLRNRPHAPTGAQWDAALGYWQQLRTDPGAVFDTEVHLDAAELSPFVTWGTNPGQGVPLCATVPDPELIGDDGERQAAEKALAYMDLEPGKAMRDIAVDAVFVGSCTNGRIEDLRVVAEVLRGRKVAPGVRMLIVPGSMRVRAQAEKEGLGEVFTVAGAEWRQAGCSMCLGMNPDQLAPGERCAATSNRNFEGRQGKGGRTHLVSPAVAAATAVRGTLSAPADLN</sequence>
<name>LEUC_MYCUA</name>
<gene>
    <name evidence="1" type="primary">leuC</name>
    <name type="ordered locus">MUL_1968</name>
</gene>
<accession>A0PPZ6</accession>
<comment type="function">
    <text evidence="1">Catalyzes the isomerization between 2-isopropylmalate and 3-isopropylmalate, via the formation of 2-isopropylmaleate.</text>
</comment>
<comment type="catalytic activity">
    <reaction evidence="1">
        <text>(2R,3S)-3-isopropylmalate = (2S)-2-isopropylmalate</text>
        <dbReference type="Rhea" id="RHEA:32287"/>
        <dbReference type="ChEBI" id="CHEBI:1178"/>
        <dbReference type="ChEBI" id="CHEBI:35121"/>
        <dbReference type="EC" id="4.2.1.33"/>
    </reaction>
</comment>
<comment type="cofactor">
    <cofactor evidence="1">
        <name>[4Fe-4S] cluster</name>
        <dbReference type="ChEBI" id="CHEBI:49883"/>
    </cofactor>
    <text evidence="1">Binds 1 [4Fe-4S] cluster per subunit.</text>
</comment>
<comment type="pathway">
    <text evidence="1">Amino-acid biosynthesis; L-leucine biosynthesis; L-leucine from 3-methyl-2-oxobutanoate: step 2/4.</text>
</comment>
<comment type="subunit">
    <text evidence="1">Heterodimer of LeuC and LeuD.</text>
</comment>
<comment type="similarity">
    <text evidence="1">Belongs to the aconitase/IPM isomerase family. LeuC type 1 subfamily.</text>
</comment>
<organism>
    <name type="scientific">Mycobacterium ulcerans (strain Agy99)</name>
    <dbReference type="NCBI Taxonomy" id="362242"/>
    <lineage>
        <taxon>Bacteria</taxon>
        <taxon>Bacillati</taxon>
        <taxon>Actinomycetota</taxon>
        <taxon>Actinomycetes</taxon>
        <taxon>Mycobacteriales</taxon>
        <taxon>Mycobacteriaceae</taxon>
        <taxon>Mycobacterium</taxon>
        <taxon>Mycobacterium ulcerans group</taxon>
    </lineage>
</organism>
<protein>
    <recommendedName>
        <fullName evidence="1">3-isopropylmalate dehydratase large subunit</fullName>
        <ecNumber evidence="1">4.2.1.33</ecNumber>
    </recommendedName>
    <alternativeName>
        <fullName evidence="1">Alpha-IPM isomerase</fullName>
        <shortName evidence="1">IPMI</shortName>
    </alternativeName>
    <alternativeName>
        <fullName evidence="1">Isopropylmalate isomerase</fullName>
    </alternativeName>
</protein>
<feature type="chain" id="PRO_0000319822" description="3-isopropylmalate dehydratase large subunit">
    <location>
        <begin position="1"/>
        <end position="473"/>
    </location>
</feature>
<feature type="binding site" evidence="1">
    <location>
        <position position="354"/>
    </location>
    <ligand>
        <name>[4Fe-4S] cluster</name>
        <dbReference type="ChEBI" id="CHEBI:49883"/>
    </ligand>
</feature>
<feature type="binding site" evidence="1">
    <location>
        <position position="414"/>
    </location>
    <ligand>
        <name>[4Fe-4S] cluster</name>
        <dbReference type="ChEBI" id="CHEBI:49883"/>
    </ligand>
</feature>
<feature type="binding site" evidence="1">
    <location>
        <position position="417"/>
    </location>
    <ligand>
        <name>[4Fe-4S] cluster</name>
        <dbReference type="ChEBI" id="CHEBI:49883"/>
    </ligand>
</feature>
<proteinExistence type="inferred from homology"/>
<dbReference type="EC" id="4.2.1.33" evidence="1"/>
<dbReference type="EMBL" id="CP000325">
    <property type="protein sequence ID" value="ABL04415.1"/>
    <property type="molecule type" value="Genomic_DNA"/>
</dbReference>
<dbReference type="RefSeq" id="WP_011740034.1">
    <property type="nucleotide sequence ID" value="NC_008611.1"/>
</dbReference>
<dbReference type="SMR" id="A0PPZ6"/>
<dbReference type="KEGG" id="mul:MUL_1968"/>
<dbReference type="eggNOG" id="COG0065">
    <property type="taxonomic scope" value="Bacteria"/>
</dbReference>
<dbReference type="HOGENOM" id="CLU_006714_3_4_11"/>
<dbReference type="UniPathway" id="UPA00048">
    <property type="reaction ID" value="UER00071"/>
</dbReference>
<dbReference type="Proteomes" id="UP000000765">
    <property type="component" value="Chromosome"/>
</dbReference>
<dbReference type="GO" id="GO:0003861">
    <property type="term" value="F:3-isopropylmalate dehydratase activity"/>
    <property type="evidence" value="ECO:0007669"/>
    <property type="project" value="UniProtKB-UniRule"/>
</dbReference>
<dbReference type="GO" id="GO:0051539">
    <property type="term" value="F:4 iron, 4 sulfur cluster binding"/>
    <property type="evidence" value="ECO:0007669"/>
    <property type="project" value="UniProtKB-KW"/>
</dbReference>
<dbReference type="GO" id="GO:0046872">
    <property type="term" value="F:metal ion binding"/>
    <property type="evidence" value="ECO:0007669"/>
    <property type="project" value="UniProtKB-KW"/>
</dbReference>
<dbReference type="GO" id="GO:0009098">
    <property type="term" value="P:L-leucine biosynthetic process"/>
    <property type="evidence" value="ECO:0007669"/>
    <property type="project" value="UniProtKB-UniRule"/>
</dbReference>
<dbReference type="CDD" id="cd01583">
    <property type="entry name" value="IPMI"/>
    <property type="match status" value="1"/>
</dbReference>
<dbReference type="FunFam" id="3.30.499.10:FF:000007">
    <property type="entry name" value="3-isopropylmalate dehydratase large subunit"/>
    <property type="match status" value="1"/>
</dbReference>
<dbReference type="Gene3D" id="3.30.499.10">
    <property type="entry name" value="Aconitase, domain 3"/>
    <property type="match status" value="2"/>
</dbReference>
<dbReference type="HAMAP" id="MF_01026">
    <property type="entry name" value="LeuC_type1"/>
    <property type="match status" value="1"/>
</dbReference>
<dbReference type="InterPro" id="IPR004430">
    <property type="entry name" value="3-IsopropMal_deHydase_lsu"/>
</dbReference>
<dbReference type="InterPro" id="IPR015931">
    <property type="entry name" value="Acnase/IPM_dHydase_lsu_aba_1/3"/>
</dbReference>
<dbReference type="InterPro" id="IPR001030">
    <property type="entry name" value="Acoase/IPM_deHydtase_lsu_aba"/>
</dbReference>
<dbReference type="InterPro" id="IPR018136">
    <property type="entry name" value="Aconitase_4Fe-4S_BS"/>
</dbReference>
<dbReference type="InterPro" id="IPR036008">
    <property type="entry name" value="Aconitase_4Fe-4S_dom"/>
</dbReference>
<dbReference type="InterPro" id="IPR050067">
    <property type="entry name" value="IPM_dehydratase_rel_enz"/>
</dbReference>
<dbReference type="InterPro" id="IPR033941">
    <property type="entry name" value="IPMI_cat"/>
</dbReference>
<dbReference type="NCBIfam" id="TIGR00170">
    <property type="entry name" value="leuC"/>
    <property type="match status" value="1"/>
</dbReference>
<dbReference type="NCBIfam" id="NF004016">
    <property type="entry name" value="PRK05478.1"/>
    <property type="match status" value="1"/>
</dbReference>
<dbReference type="NCBIfam" id="NF009116">
    <property type="entry name" value="PRK12466.1"/>
    <property type="match status" value="1"/>
</dbReference>
<dbReference type="PANTHER" id="PTHR43822:SF9">
    <property type="entry name" value="3-ISOPROPYLMALATE DEHYDRATASE"/>
    <property type="match status" value="1"/>
</dbReference>
<dbReference type="PANTHER" id="PTHR43822">
    <property type="entry name" value="HOMOACONITASE, MITOCHONDRIAL-RELATED"/>
    <property type="match status" value="1"/>
</dbReference>
<dbReference type="Pfam" id="PF00330">
    <property type="entry name" value="Aconitase"/>
    <property type="match status" value="1"/>
</dbReference>
<dbReference type="PRINTS" id="PR00415">
    <property type="entry name" value="ACONITASE"/>
</dbReference>
<dbReference type="SUPFAM" id="SSF53732">
    <property type="entry name" value="Aconitase iron-sulfur domain"/>
    <property type="match status" value="1"/>
</dbReference>
<dbReference type="PROSITE" id="PS00450">
    <property type="entry name" value="ACONITASE_1"/>
    <property type="match status" value="1"/>
</dbReference>
<dbReference type="PROSITE" id="PS01244">
    <property type="entry name" value="ACONITASE_2"/>
    <property type="match status" value="1"/>
</dbReference>
<evidence type="ECO:0000255" key="1">
    <source>
        <dbReference type="HAMAP-Rule" id="MF_01026"/>
    </source>
</evidence>
<keyword id="KW-0004">4Fe-4S</keyword>
<keyword id="KW-0028">Amino-acid biosynthesis</keyword>
<keyword id="KW-0100">Branched-chain amino acid biosynthesis</keyword>
<keyword id="KW-0408">Iron</keyword>
<keyword id="KW-0411">Iron-sulfur</keyword>
<keyword id="KW-0432">Leucine biosynthesis</keyword>
<keyword id="KW-0456">Lyase</keyword>
<keyword id="KW-0479">Metal-binding</keyword>
<reference key="1">
    <citation type="journal article" date="2007" name="Genome Res.">
        <title>Reductive evolution and niche adaptation inferred from the genome of Mycobacterium ulcerans, the causative agent of Buruli ulcer.</title>
        <authorList>
            <person name="Stinear T.P."/>
            <person name="Seemann T."/>
            <person name="Pidot S."/>
            <person name="Frigui W."/>
            <person name="Reysset G."/>
            <person name="Garnier T."/>
            <person name="Meurice G."/>
            <person name="Simon D."/>
            <person name="Bouchier C."/>
            <person name="Ma L."/>
            <person name="Tichit M."/>
            <person name="Porter J.L."/>
            <person name="Ryan J."/>
            <person name="Johnson P.D.R."/>
            <person name="Davies J.K."/>
            <person name="Jenkin G.A."/>
            <person name="Small P.L.C."/>
            <person name="Jones L.M."/>
            <person name="Tekaia F."/>
            <person name="Laval F."/>
            <person name="Daffe M."/>
            <person name="Parkhill J."/>
            <person name="Cole S.T."/>
        </authorList>
    </citation>
    <scope>NUCLEOTIDE SEQUENCE [LARGE SCALE GENOMIC DNA]</scope>
    <source>
        <strain>Agy99</strain>
    </source>
</reference>